<comment type="similarity">
    <text evidence="1">Belongs to the bacterial ribosomal protein bL33 family.</text>
</comment>
<gene>
    <name evidence="1" type="primary">rpmG</name>
    <name type="ordered locus">SeSA_A3926</name>
</gene>
<reference key="1">
    <citation type="journal article" date="2011" name="J. Bacteriol.">
        <title>Comparative genomics of 28 Salmonella enterica isolates: evidence for CRISPR-mediated adaptive sublineage evolution.</title>
        <authorList>
            <person name="Fricke W.F."/>
            <person name="Mammel M.K."/>
            <person name="McDermott P.F."/>
            <person name="Tartera C."/>
            <person name="White D.G."/>
            <person name="Leclerc J.E."/>
            <person name="Ravel J."/>
            <person name="Cebula T.A."/>
        </authorList>
    </citation>
    <scope>NUCLEOTIDE SEQUENCE [LARGE SCALE GENOMIC DNA]</scope>
    <source>
        <strain>CVM19633</strain>
    </source>
</reference>
<name>RL33_SALSV</name>
<organism>
    <name type="scientific">Salmonella schwarzengrund (strain CVM19633)</name>
    <dbReference type="NCBI Taxonomy" id="439843"/>
    <lineage>
        <taxon>Bacteria</taxon>
        <taxon>Pseudomonadati</taxon>
        <taxon>Pseudomonadota</taxon>
        <taxon>Gammaproteobacteria</taxon>
        <taxon>Enterobacterales</taxon>
        <taxon>Enterobacteriaceae</taxon>
        <taxon>Salmonella</taxon>
    </lineage>
</organism>
<sequence length="55" mass="6372">MAKGIREKIKLVSSAGTGHFYTTTKNKRTKPEKLELKKFDPVVRQHVIYKEAKIK</sequence>
<keyword id="KW-0687">Ribonucleoprotein</keyword>
<keyword id="KW-0689">Ribosomal protein</keyword>
<protein>
    <recommendedName>
        <fullName evidence="1">Large ribosomal subunit protein bL33</fullName>
    </recommendedName>
    <alternativeName>
        <fullName evidence="2">50S ribosomal protein L33</fullName>
    </alternativeName>
</protein>
<dbReference type="EMBL" id="CP001127">
    <property type="protein sequence ID" value="ACF91287.1"/>
    <property type="molecule type" value="Genomic_DNA"/>
</dbReference>
<dbReference type="RefSeq" id="WP_001051798.1">
    <property type="nucleotide sequence ID" value="NC_011094.1"/>
</dbReference>
<dbReference type="SMR" id="B4TZX8"/>
<dbReference type="GeneID" id="97607673"/>
<dbReference type="KEGG" id="sew:SeSA_A3926"/>
<dbReference type="HOGENOM" id="CLU_190949_1_1_6"/>
<dbReference type="Proteomes" id="UP000001865">
    <property type="component" value="Chromosome"/>
</dbReference>
<dbReference type="GO" id="GO:0022625">
    <property type="term" value="C:cytosolic large ribosomal subunit"/>
    <property type="evidence" value="ECO:0007669"/>
    <property type="project" value="TreeGrafter"/>
</dbReference>
<dbReference type="GO" id="GO:0003735">
    <property type="term" value="F:structural constituent of ribosome"/>
    <property type="evidence" value="ECO:0007669"/>
    <property type="project" value="InterPro"/>
</dbReference>
<dbReference type="GO" id="GO:0006412">
    <property type="term" value="P:translation"/>
    <property type="evidence" value="ECO:0007669"/>
    <property type="project" value="UniProtKB-UniRule"/>
</dbReference>
<dbReference type="FunFam" id="2.20.28.120:FF:000001">
    <property type="entry name" value="50S ribosomal protein L33"/>
    <property type="match status" value="1"/>
</dbReference>
<dbReference type="Gene3D" id="2.20.28.120">
    <property type="entry name" value="Ribosomal protein L33"/>
    <property type="match status" value="1"/>
</dbReference>
<dbReference type="HAMAP" id="MF_00294">
    <property type="entry name" value="Ribosomal_bL33"/>
    <property type="match status" value="1"/>
</dbReference>
<dbReference type="InterPro" id="IPR001705">
    <property type="entry name" value="Ribosomal_bL33"/>
</dbReference>
<dbReference type="InterPro" id="IPR018264">
    <property type="entry name" value="Ribosomal_bL33_CS"/>
</dbReference>
<dbReference type="InterPro" id="IPR038584">
    <property type="entry name" value="Ribosomal_bL33_sf"/>
</dbReference>
<dbReference type="InterPro" id="IPR011332">
    <property type="entry name" value="Ribosomal_zn-bd"/>
</dbReference>
<dbReference type="NCBIfam" id="NF001860">
    <property type="entry name" value="PRK00595.1"/>
    <property type="match status" value="1"/>
</dbReference>
<dbReference type="NCBIfam" id="TIGR01023">
    <property type="entry name" value="rpmG_bact"/>
    <property type="match status" value="1"/>
</dbReference>
<dbReference type="PANTHER" id="PTHR15238">
    <property type="entry name" value="54S RIBOSOMAL PROTEIN L39, MITOCHONDRIAL"/>
    <property type="match status" value="1"/>
</dbReference>
<dbReference type="PANTHER" id="PTHR15238:SF1">
    <property type="entry name" value="LARGE RIBOSOMAL SUBUNIT PROTEIN BL33M"/>
    <property type="match status" value="1"/>
</dbReference>
<dbReference type="Pfam" id="PF00471">
    <property type="entry name" value="Ribosomal_L33"/>
    <property type="match status" value="1"/>
</dbReference>
<dbReference type="SUPFAM" id="SSF57829">
    <property type="entry name" value="Zn-binding ribosomal proteins"/>
    <property type="match status" value="1"/>
</dbReference>
<dbReference type="PROSITE" id="PS00582">
    <property type="entry name" value="RIBOSOMAL_L33"/>
    <property type="match status" value="1"/>
</dbReference>
<proteinExistence type="inferred from homology"/>
<feature type="chain" id="PRO_1000115160" description="Large ribosomal subunit protein bL33">
    <location>
        <begin position="1"/>
        <end position="55"/>
    </location>
</feature>
<accession>B4TZX8</accession>
<evidence type="ECO:0000255" key="1">
    <source>
        <dbReference type="HAMAP-Rule" id="MF_00294"/>
    </source>
</evidence>
<evidence type="ECO:0000305" key="2"/>